<sequence>MSSLTNQDAINSIDIDVGGTFTDFVLTLDGERHIAKCPTTPHDLSIGFLNAVEAGGDKVGLSVEELLPRIDIIRYSTTVALNRLLQRQGPRIGLLTTEGHEDAILIGRGAQWTDGQRVAERRNIAVQNKPLPLIERDLILGVRERIDSSGSVVRPLDEEDVRTKLRMLMDRGARAIVVSLLWSFMNPAHEKRVREIIREEYKEYHIGFVPVVMSHSVVSKIGEYERTMTAVLDAYLQRSMQNDIGATWDKLRAKGYHGAFLMIHNSGGSADIFKTPASRTFNGGPVAGLMGSAYFANKLGYKNVVAGDVGGTSFDVALVVESSVRNYTFRPVIDKWMVNVTMMQTISVGSGGGSIAKVDRSGTRLEVGPRSAGSMPGPVCYDLGGTEPTVTDADVVLGYINPDTYYGGRMPLNKAKAEKAIREKIAQPLGIETIEAAALIRYIVDENMASAIKREVHMRGYHPEDFVLFAFGGAGPTHMAGLKGDIPKAVVFPAAPVFCAMGSSIMDIVHMYEQSRRMVFMEPGTEKFVVDYEHFNQTVDTMIERARQELRSEGLEVDDASFGLELDMLYGGQVNLKRMSSPLLHIRTAEDALKVYQAFETEFSEAFSPLVVNKPGGVFLDNFVLRVTVPTWKPPIPEYPLQGTDPSAAFLGKRKAYWPETKHWADTPTYQFELLQAGNVIDGPAIVEAELTTIVVPPRQRLSIDTHGLAILEAIDPAPPTKRVSAAAAAIV</sequence>
<accession>Q5P5G4</accession>
<feature type="initiator methionine" description="Removed" evidence="1">
    <location>
        <position position="1"/>
    </location>
</feature>
<feature type="chain" id="PRO_0000419040" description="Acetophenone carboxylase gamma subunit">
    <location>
        <begin position="2"/>
        <end position="732"/>
    </location>
</feature>
<feature type="strand" evidence="5">
    <location>
        <begin position="12"/>
        <end position="17"/>
    </location>
</feature>
<feature type="strand" evidence="5">
    <location>
        <begin position="19"/>
        <end position="28"/>
    </location>
</feature>
<feature type="strand" evidence="5">
    <location>
        <begin position="31"/>
        <end position="38"/>
    </location>
</feature>
<feature type="helix" evidence="5">
    <location>
        <begin position="44"/>
        <end position="57"/>
    </location>
</feature>
<feature type="turn" evidence="5">
    <location>
        <begin position="58"/>
        <end position="60"/>
    </location>
</feature>
<feature type="helix" evidence="5">
    <location>
        <begin position="63"/>
        <end position="66"/>
    </location>
</feature>
<feature type="helix" evidence="5">
    <location>
        <begin position="67"/>
        <end position="69"/>
    </location>
</feature>
<feature type="strand" evidence="5">
    <location>
        <begin position="72"/>
        <end position="78"/>
    </location>
</feature>
<feature type="helix" evidence="5">
    <location>
        <begin position="79"/>
        <end position="85"/>
    </location>
</feature>
<feature type="strand" evidence="5">
    <location>
        <begin position="92"/>
        <end position="97"/>
    </location>
</feature>
<feature type="helix" evidence="5">
    <location>
        <begin position="103"/>
        <end position="106"/>
    </location>
</feature>
<feature type="turn" evidence="5">
    <location>
        <begin position="107"/>
        <end position="110"/>
    </location>
</feature>
<feature type="helix" evidence="5">
    <location>
        <begin position="111"/>
        <end position="113"/>
    </location>
</feature>
<feature type="helix" evidence="5">
    <location>
        <begin position="118"/>
        <end position="121"/>
    </location>
</feature>
<feature type="helix" evidence="5">
    <location>
        <begin position="124"/>
        <end position="126"/>
    </location>
</feature>
<feature type="strand" evidence="5">
    <location>
        <begin position="139"/>
        <end position="143"/>
    </location>
</feature>
<feature type="strand" evidence="5">
    <location>
        <begin position="152"/>
        <end position="154"/>
    </location>
</feature>
<feature type="helix" evidence="5">
    <location>
        <begin position="158"/>
        <end position="170"/>
    </location>
</feature>
<feature type="strand" evidence="5">
    <location>
        <begin position="174"/>
        <end position="179"/>
    </location>
</feature>
<feature type="turn" evidence="5">
    <location>
        <begin position="181"/>
        <end position="185"/>
    </location>
</feature>
<feature type="helix" evidence="5">
    <location>
        <begin position="188"/>
        <end position="200"/>
    </location>
</feature>
<feature type="strand" evidence="5">
    <location>
        <begin position="205"/>
        <end position="207"/>
    </location>
</feature>
<feature type="strand" evidence="5">
    <location>
        <begin position="211"/>
        <end position="213"/>
    </location>
</feature>
<feature type="helix" evidence="5">
    <location>
        <begin position="214"/>
        <end position="217"/>
    </location>
</feature>
<feature type="helix" evidence="5">
    <location>
        <begin position="223"/>
        <end position="253"/>
    </location>
</feature>
<feature type="strand" evidence="5">
    <location>
        <begin position="258"/>
        <end position="263"/>
    </location>
</feature>
<feature type="strand" evidence="5">
    <location>
        <begin position="267"/>
        <end position="271"/>
    </location>
</feature>
<feature type="helix" evidence="5">
    <location>
        <begin position="272"/>
        <end position="274"/>
    </location>
</feature>
<feature type="helix" evidence="5">
    <location>
        <begin position="277"/>
        <end position="279"/>
    </location>
</feature>
<feature type="turn" evidence="5">
    <location>
        <begin position="280"/>
        <end position="282"/>
    </location>
</feature>
<feature type="helix" evidence="5">
    <location>
        <begin position="283"/>
        <end position="298"/>
    </location>
</feature>
<feature type="strand" evidence="5">
    <location>
        <begin position="304"/>
        <end position="309"/>
    </location>
</feature>
<feature type="strand" evidence="5">
    <location>
        <begin position="314"/>
        <end position="319"/>
    </location>
</feature>
<feature type="helix" evidence="5">
    <location>
        <begin position="323"/>
        <end position="325"/>
    </location>
</feature>
<feature type="strand" evidence="5">
    <location>
        <begin position="327"/>
        <end position="330"/>
    </location>
</feature>
<feature type="strand" evidence="5">
    <location>
        <begin position="346"/>
        <end position="349"/>
    </location>
</feature>
<feature type="strand" evidence="5">
    <location>
        <begin position="354"/>
        <end position="358"/>
    </location>
</feature>
<feature type="strand" evidence="5">
    <location>
        <begin position="365"/>
        <end position="371"/>
    </location>
</feature>
<feature type="turn" evidence="5">
    <location>
        <begin position="373"/>
        <end position="376"/>
    </location>
</feature>
<feature type="helix" evidence="5">
    <location>
        <begin position="379"/>
        <end position="381"/>
    </location>
</feature>
<feature type="helix" evidence="5">
    <location>
        <begin position="390"/>
        <end position="396"/>
    </location>
</feature>
<feature type="strand" evidence="5">
    <location>
        <begin position="402"/>
        <end position="404"/>
    </location>
</feature>
<feature type="helix" evidence="5">
    <location>
        <begin position="414"/>
        <end position="424"/>
    </location>
</feature>
<feature type="turn" evidence="5">
    <location>
        <begin position="425"/>
        <end position="430"/>
    </location>
</feature>
<feature type="helix" evidence="5">
    <location>
        <begin position="433"/>
        <end position="458"/>
    </location>
</feature>
<feature type="helix" evidence="5">
    <location>
        <begin position="463"/>
        <end position="465"/>
    </location>
</feature>
<feature type="strand" evidence="5">
    <location>
        <begin position="467"/>
        <end position="474"/>
    </location>
</feature>
<feature type="helix" evidence="5">
    <location>
        <begin position="475"/>
        <end position="482"/>
    </location>
</feature>
<feature type="turn" evidence="5">
    <location>
        <begin position="483"/>
        <end position="485"/>
    </location>
</feature>
<feature type="strand" evidence="5">
    <location>
        <begin position="487"/>
        <end position="491"/>
    </location>
</feature>
<feature type="helix" evidence="5">
    <location>
        <begin position="495"/>
        <end position="505"/>
    </location>
</feature>
<feature type="strand" evidence="5">
    <location>
        <begin position="508"/>
        <end position="521"/>
    </location>
</feature>
<feature type="turn" evidence="5">
    <location>
        <begin position="523"/>
        <end position="525"/>
    </location>
</feature>
<feature type="helix" evidence="5">
    <location>
        <begin position="532"/>
        <end position="552"/>
    </location>
</feature>
<feature type="helix" evidence="5">
    <location>
        <begin position="557"/>
        <end position="559"/>
    </location>
</feature>
<feature type="strand" evidence="5">
    <location>
        <begin position="561"/>
        <end position="570"/>
    </location>
</feature>
<feature type="strand" evidence="5">
    <location>
        <begin position="577"/>
        <end position="580"/>
    </location>
</feature>
<feature type="helix" evidence="5">
    <location>
        <begin position="589"/>
        <end position="606"/>
    </location>
</feature>
<feature type="helix" evidence="5">
    <location>
        <begin position="609"/>
        <end position="611"/>
    </location>
</feature>
<feature type="helix" evidence="5">
    <location>
        <begin position="614"/>
        <end position="616"/>
    </location>
</feature>
<feature type="strand" evidence="5">
    <location>
        <begin position="618"/>
        <end position="629"/>
    </location>
</feature>
<feature type="helix" evidence="5">
    <location>
        <begin position="647"/>
        <end position="649"/>
    </location>
</feature>
<feature type="strand" evidence="5">
    <location>
        <begin position="650"/>
        <end position="658"/>
    </location>
</feature>
<feature type="turn" evidence="5">
    <location>
        <begin position="659"/>
        <end position="662"/>
    </location>
</feature>
<feature type="strand" evidence="5">
    <location>
        <begin position="663"/>
        <end position="671"/>
    </location>
</feature>
<feature type="helix" evidence="5">
    <location>
        <begin position="672"/>
        <end position="674"/>
    </location>
</feature>
<feature type="strand" evidence="5">
    <location>
        <begin position="683"/>
        <end position="688"/>
    </location>
</feature>
<feature type="strand" evidence="5">
    <location>
        <begin position="693"/>
        <end position="696"/>
    </location>
</feature>
<feature type="strand" evidence="5">
    <location>
        <begin position="700"/>
        <end position="704"/>
    </location>
</feature>
<feature type="strand" evidence="5">
    <location>
        <begin position="710"/>
        <end position="716"/>
    </location>
</feature>
<gene>
    <name type="primary">apc3</name>
    <name type="synonym">apcC</name>
    <name type="ordered locus">AZOSEA13230</name>
    <name type="ORF">c1A102</name>
</gene>
<name>APCC_AROAE</name>
<organism>
    <name type="scientific">Aromatoleum aromaticum (strain DSM 19018 / LMG 30748 / EbN1)</name>
    <name type="common">Azoarcus sp. (strain EbN1)</name>
    <dbReference type="NCBI Taxonomy" id="76114"/>
    <lineage>
        <taxon>Bacteria</taxon>
        <taxon>Pseudomonadati</taxon>
        <taxon>Pseudomonadota</taxon>
        <taxon>Betaproteobacteria</taxon>
        <taxon>Rhodocyclales</taxon>
        <taxon>Rhodocyclaceae</taxon>
        <taxon>Aromatoleum</taxon>
    </lineage>
</organism>
<protein>
    <recommendedName>
        <fullName>Acetophenone carboxylase gamma subunit</fullName>
        <ecNumber>6.4.1.8</ecNumber>
    </recommendedName>
    <alternativeName>
        <fullName>Acetophenone carboxylase 87 kDa subunit</fullName>
    </alternativeName>
</protein>
<proteinExistence type="evidence at protein level"/>
<comment type="function">
    <text evidence="3">Catalyzes the carboxylation of acetophenone to form 3-oxo-3-phenylpropanoate (benzoylacetate) in the anaerobic catabolism of ethylbenzene. Also carboxylates propiophenone at the same rate and 4-acetyl-pyridine at lower rates.</text>
</comment>
<comment type="catalytic activity">
    <reaction evidence="3">
        <text>acetophenone + hydrogencarbonate + 2 ATP + H2O = 3-oxo-3-phenylpropanoate + 2 ADP + 2 phosphate + 2 H(+)</text>
        <dbReference type="Rhea" id="RHEA:28647"/>
        <dbReference type="ChEBI" id="CHEBI:15377"/>
        <dbReference type="ChEBI" id="CHEBI:15378"/>
        <dbReference type="ChEBI" id="CHEBI:17544"/>
        <dbReference type="ChEBI" id="CHEBI:22731"/>
        <dbReference type="ChEBI" id="CHEBI:27632"/>
        <dbReference type="ChEBI" id="CHEBI:30616"/>
        <dbReference type="ChEBI" id="CHEBI:43474"/>
        <dbReference type="ChEBI" id="CHEBI:456216"/>
        <dbReference type="EC" id="6.4.1.8"/>
    </reaction>
</comment>
<comment type="cofactor">
    <cofactor evidence="3">
        <name>Mg(2+)</name>
        <dbReference type="ChEBI" id="CHEBI:18420"/>
    </cofactor>
    <cofactor evidence="3">
        <name>Mn(2+)</name>
        <dbReference type="ChEBI" id="CHEBI:29035"/>
    </cofactor>
    <text evidence="3">Divalent metal cations. Magnesium or manganese are required for activity.</text>
</comment>
<comment type="activity regulation">
    <text evidence="3">Inhibited by zinc ions, carbamoylphosphate and beta,gamma-imido-ATP.</text>
</comment>
<comment type="biophysicochemical properties">
    <kinetics>
        <KM evidence="3">33 uM for acetophone</KM>
        <KM evidence="3">0.54 mM for HCO(3)(-)</KM>
        <KM evidence="3">0.5 mM for ATP</KM>
        <Vmax evidence="3">51.0 mmol/min/mg enzyme</Vmax>
        <text>Kinetic parameters have been established using the heteromeric complex including recombinant Apc5.</text>
    </kinetics>
</comment>
<comment type="subunit">
    <text evidence="3">Acetophenone carboxylase consists of five subunits; a heterooctameric subcomplex of two alpha (Apc1), two beta (Apc2), two gamma (Apc3) and two delta (Apc4) subunits assembles with the epsilon (Apc5) subunit in an unknown stoichiometry.</text>
</comment>
<comment type="subcellular location">
    <subcellularLocation>
        <location evidence="4">Cytoplasm</location>
    </subcellularLocation>
</comment>
<comment type="induction">
    <text evidence="1 2">By ethylbenzene, toluene and acetophenone.</text>
</comment>
<comment type="similarity">
    <text evidence="4">Belongs to the HyuA family.</text>
</comment>
<keyword id="KW-0002">3D-structure</keyword>
<keyword id="KW-0067">ATP-binding</keyword>
<keyword id="KW-0963">Cytoplasm</keyword>
<keyword id="KW-0903">Direct protein sequencing</keyword>
<keyword id="KW-0436">Ligase</keyword>
<keyword id="KW-0547">Nucleotide-binding</keyword>
<keyword id="KW-1185">Reference proteome</keyword>
<reference key="1">
    <citation type="journal article" date="2005" name="Arch. Microbiol.">
        <title>The genome sequence of an anaerobic aromatic-degrading denitrifying bacterium, strain EbN1.</title>
        <authorList>
            <person name="Rabus R."/>
            <person name="Kube M."/>
            <person name="Heider J."/>
            <person name="Beck A."/>
            <person name="Heitmann K."/>
            <person name="Widdel F."/>
            <person name="Reinhardt R."/>
        </authorList>
    </citation>
    <scope>NUCLEOTIDE SEQUENCE [LARGE SCALE GENOMIC DNA]</scope>
    <source>
        <strain>DSM 19018 / LMG 30748 / EbN1</strain>
    </source>
</reference>
<reference key="2">
    <citation type="journal article" date="1999" name="J. Mol. Microbiol. Biotechnol.">
        <title>Anaerobic degradation of ethylbenzene and toluene in denitrifying strain EbN1 proceeds via independent substrate-induced pathways.</title>
        <authorList>
            <person name="Champion K.M."/>
            <person name="Zengler K."/>
            <person name="Rabus R."/>
        </authorList>
    </citation>
    <scope>PROTEIN SEQUENCE OF 2-36</scope>
    <scope>INDUCTION</scope>
</reference>
<reference key="3">
    <citation type="journal article" date="2002" name="Arch. Microbiol.">
        <title>Genes involved in the anaerobic degradation of ethylbenzene in a denitrifying bacterium, strain EbN1.</title>
        <authorList>
            <person name="Rabus R."/>
            <person name="Kube M."/>
            <person name="Beck A."/>
            <person name="Widdel F."/>
            <person name="Reinhardt R."/>
        </authorList>
    </citation>
    <scope>IDENTIFICATION</scope>
</reference>
<reference key="4">
    <citation type="journal article" date="2005" name="J. Bacteriol.">
        <title>Substrate-dependent regulation of anaerobic degradation pathways for toluene and ethylbenzene in a denitrifying bacterium, strain EbN1.</title>
        <authorList>
            <person name="Kuhner S."/>
            <person name="Wohlbrand L."/>
            <person name="Fritz I."/>
            <person name="Wruck W."/>
            <person name="Hultschig C."/>
            <person name="Hufnagel P."/>
            <person name="Kube M."/>
            <person name="Reinhardt R."/>
            <person name="Rabus R."/>
        </authorList>
    </citation>
    <scope>INDUCTION</scope>
    <scope>IDENTIFICATION BY MASS SPECTROMETRY</scope>
</reference>
<reference key="5">
    <citation type="journal article" date="2010" name="J. Bacteriol.">
        <title>ATP-dependent carboxylation of acetophenone by a novel type of carboxylase.</title>
        <authorList>
            <person name="Jobst B."/>
            <person name="Schuhle K."/>
            <person name="Linne U."/>
            <person name="Heider J."/>
        </authorList>
    </citation>
    <scope>FUNCTION</scope>
    <scope>CATALYTIC ACTIVITY</scope>
    <scope>ACTIVITY REGULATION</scope>
    <scope>BIOPHYSICOCHEMICAL PROPERTIES</scope>
    <scope>COFACTOR</scope>
    <scope>SUBUNIT</scope>
</reference>
<evidence type="ECO:0000269" key="1">
    <source>
    </source>
</evidence>
<evidence type="ECO:0000269" key="2">
    <source>
    </source>
</evidence>
<evidence type="ECO:0000269" key="3">
    <source>
    </source>
</evidence>
<evidence type="ECO:0000305" key="4"/>
<evidence type="ECO:0007829" key="5">
    <source>
        <dbReference type="PDB" id="5L9W"/>
    </source>
</evidence>
<dbReference type="EC" id="6.4.1.8"/>
<dbReference type="EMBL" id="CR555306">
    <property type="protein sequence ID" value="CAI07448.1"/>
    <property type="molecule type" value="Genomic_DNA"/>
</dbReference>
<dbReference type="RefSeq" id="WP_011237168.1">
    <property type="nucleotide sequence ID" value="NC_006513.1"/>
</dbReference>
<dbReference type="PDB" id="5L9W">
    <property type="method" value="X-ray"/>
    <property type="resolution" value="2.90 A"/>
    <property type="chains" value="B=1-732"/>
</dbReference>
<dbReference type="PDBsum" id="5L9W"/>
<dbReference type="SMR" id="Q5P5G4"/>
<dbReference type="STRING" id="76114.c1A102"/>
<dbReference type="KEGG" id="eba:c1A102"/>
<dbReference type="eggNOG" id="COG0145">
    <property type="taxonomic scope" value="Bacteria"/>
</dbReference>
<dbReference type="HOGENOM" id="CLU_002157_1_2_4"/>
<dbReference type="OrthoDB" id="9768323at2"/>
<dbReference type="BioCyc" id="MetaCyc:MONOMER-14362"/>
<dbReference type="BRENDA" id="6.4.1.8">
    <property type="organism ID" value="12182"/>
</dbReference>
<dbReference type="Proteomes" id="UP000006552">
    <property type="component" value="Chromosome"/>
</dbReference>
<dbReference type="GO" id="GO:0005829">
    <property type="term" value="C:cytosol"/>
    <property type="evidence" value="ECO:0007669"/>
    <property type="project" value="TreeGrafter"/>
</dbReference>
<dbReference type="GO" id="GO:0017168">
    <property type="term" value="F:5-oxoprolinase (ATP-hydrolyzing) activity"/>
    <property type="evidence" value="ECO:0007669"/>
    <property type="project" value="TreeGrafter"/>
</dbReference>
<dbReference type="GO" id="GO:0005524">
    <property type="term" value="F:ATP binding"/>
    <property type="evidence" value="ECO:0007669"/>
    <property type="project" value="UniProtKB-KW"/>
</dbReference>
<dbReference type="GO" id="GO:0016874">
    <property type="term" value="F:ligase activity"/>
    <property type="evidence" value="ECO:0007669"/>
    <property type="project" value="UniProtKB-KW"/>
</dbReference>
<dbReference type="GO" id="GO:0006749">
    <property type="term" value="P:glutathione metabolic process"/>
    <property type="evidence" value="ECO:0007669"/>
    <property type="project" value="TreeGrafter"/>
</dbReference>
<dbReference type="InterPro" id="IPR049517">
    <property type="entry name" value="ACX-like_C"/>
</dbReference>
<dbReference type="InterPro" id="IPR050000">
    <property type="entry name" value="ApcC"/>
</dbReference>
<dbReference type="InterPro" id="IPR008040">
    <property type="entry name" value="Hydant_A_N"/>
</dbReference>
<dbReference type="InterPro" id="IPR002821">
    <property type="entry name" value="Hydantoinase_A"/>
</dbReference>
<dbReference type="InterPro" id="IPR045079">
    <property type="entry name" value="Oxoprolinase-like"/>
</dbReference>
<dbReference type="NCBIfam" id="NF042975">
    <property type="entry name" value="AcphenoCarb_ApcC"/>
    <property type="match status" value="1"/>
</dbReference>
<dbReference type="PANTHER" id="PTHR11365">
    <property type="entry name" value="5-OXOPROLINASE RELATED"/>
    <property type="match status" value="1"/>
</dbReference>
<dbReference type="PANTHER" id="PTHR11365:SF23">
    <property type="entry name" value="HYPOTHETICAL 5-OXOPROLINASE (EUROFUNG)-RELATED"/>
    <property type="match status" value="1"/>
</dbReference>
<dbReference type="Pfam" id="PF19278">
    <property type="entry name" value="Hydant_A_C"/>
    <property type="match status" value="1"/>
</dbReference>
<dbReference type="Pfam" id="PF05378">
    <property type="entry name" value="Hydant_A_N"/>
    <property type="match status" value="1"/>
</dbReference>
<dbReference type="Pfam" id="PF01968">
    <property type="entry name" value="Hydantoinase_A"/>
    <property type="match status" value="1"/>
</dbReference>